<proteinExistence type="evidence at protein level"/>
<dbReference type="EMBL" id="AC022522">
    <property type="protein sequence ID" value="AAG12570.1"/>
    <property type="status" value="ALT_SEQ"/>
    <property type="molecule type" value="Genomic_DNA"/>
</dbReference>
<dbReference type="EMBL" id="CP002684">
    <property type="protein sequence ID" value="AEE28857.1"/>
    <property type="molecule type" value="Genomic_DNA"/>
</dbReference>
<dbReference type="EMBL" id="AY142640">
    <property type="protein sequence ID" value="AAN13098.1"/>
    <property type="molecule type" value="mRNA"/>
</dbReference>
<dbReference type="EMBL" id="AY035122">
    <property type="protein sequence ID" value="AAK59627.1"/>
    <property type="molecule type" value="mRNA"/>
</dbReference>
<dbReference type="PIR" id="F86257">
    <property type="entry name" value="F86257"/>
</dbReference>
<dbReference type="RefSeq" id="NP_563902.1">
    <molecule id="Q8H1Q1-1"/>
    <property type="nucleotide sequence ID" value="NM_101097.4"/>
</dbReference>
<dbReference type="SMR" id="Q8H1Q1"/>
<dbReference type="BioGRID" id="23018">
    <property type="interactions" value="1"/>
</dbReference>
<dbReference type="FunCoup" id="Q8H1Q1">
    <property type="interactions" value="1400"/>
</dbReference>
<dbReference type="IntAct" id="Q8H1Q1">
    <property type="interactions" value="1"/>
</dbReference>
<dbReference type="STRING" id="3702.Q8H1Q1"/>
<dbReference type="PaxDb" id="3702-AT1G12250.1"/>
<dbReference type="EnsemblPlants" id="AT1G12250.1">
    <molecule id="Q8H1Q1-1"/>
    <property type="protein sequence ID" value="AT1G12250.1"/>
    <property type="gene ID" value="AT1G12250"/>
</dbReference>
<dbReference type="GeneID" id="837778"/>
<dbReference type="Gramene" id="AT1G12250.1">
    <molecule id="Q8H1Q1-1"/>
    <property type="protein sequence ID" value="AT1G12250.1"/>
    <property type="gene ID" value="AT1G12250"/>
</dbReference>
<dbReference type="KEGG" id="ath:AT1G12250"/>
<dbReference type="Araport" id="AT1G12250"/>
<dbReference type="TAIR" id="AT1G12250">
    <property type="gene designation" value="TL20.3"/>
</dbReference>
<dbReference type="eggNOG" id="ENOG502QSEG">
    <property type="taxonomic scope" value="Eukaryota"/>
</dbReference>
<dbReference type="HOGENOM" id="CLU_066336_4_0_1"/>
<dbReference type="InParanoid" id="Q8H1Q1"/>
<dbReference type="PhylomeDB" id="Q8H1Q1"/>
<dbReference type="PRO" id="PR:Q8H1Q1"/>
<dbReference type="Proteomes" id="UP000006548">
    <property type="component" value="Chromosome 1"/>
</dbReference>
<dbReference type="ExpressionAtlas" id="Q8H1Q1">
    <property type="expression patterns" value="baseline and differential"/>
</dbReference>
<dbReference type="GO" id="GO:0009507">
    <property type="term" value="C:chloroplast"/>
    <property type="evidence" value="ECO:0007005"/>
    <property type="project" value="TAIR"/>
</dbReference>
<dbReference type="GO" id="GO:0009534">
    <property type="term" value="C:chloroplast thylakoid"/>
    <property type="evidence" value="ECO:0007005"/>
    <property type="project" value="TAIR"/>
</dbReference>
<dbReference type="GO" id="GO:0009543">
    <property type="term" value="C:chloroplast thylakoid lumen"/>
    <property type="evidence" value="ECO:0000314"/>
    <property type="project" value="TAIR"/>
</dbReference>
<dbReference type="GO" id="GO:0009535">
    <property type="term" value="C:chloroplast thylakoid membrane"/>
    <property type="evidence" value="ECO:0007005"/>
    <property type="project" value="TAIR"/>
</dbReference>
<dbReference type="GO" id="GO:0005576">
    <property type="term" value="C:extracellular region"/>
    <property type="evidence" value="ECO:0007005"/>
    <property type="project" value="TAIR"/>
</dbReference>
<dbReference type="GO" id="GO:0009579">
    <property type="term" value="C:thylakoid"/>
    <property type="evidence" value="ECO:0007005"/>
    <property type="project" value="TAIR"/>
</dbReference>
<dbReference type="Gene3D" id="2.160.20.80">
    <property type="entry name" value="E3 ubiquitin-protein ligase SopA"/>
    <property type="match status" value="1"/>
</dbReference>
<dbReference type="InterPro" id="IPR001646">
    <property type="entry name" value="5peptide_repeat"/>
</dbReference>
<dbReference type="InterPro" id="IPR053285">
    <property type="entry name" value="Thylakoid_lumenal_pentapeptide"/>
</dbReference>
<dbReference type="PANTHER" id="PTHR47121">
    <property type="entry name" value="THYLAKOID LUMENAL PROTEIN TL20.3, CHLOROPLASTIC"/>
    <property type="match status" value="1"/>
</dbReference>
<dbReference type="PANTHER" id="PTHR47121:SF2">
    <property type="entry name" value="THYLAKOID LUMENAL PROTEIN TL20.3, CHLOROPLASTIC"/>
    <property type="match status" value="1"/>
</dbReference>
<dbReference type="Pfam" id="PF00805">
    <property type="entry name" value="Pentapeptide"/>
    <property type="match status" value="2"/>
</dbReference>
<dbReference type="SUPFAM" id="SSF141571">
    <property type="entry name" value="Pentapeptide repeat-like"/>
    <property type="match status" value="1"/>
</dbReference>
<sequence>MAFSSLSPLPMKSLDISRSSSSVSRSPYHFQRYLLRRLQLSSRSNLEIKDSSNTREGCCSSAESNTWKRILSAAMAAAVIASSSGVPAMAELNRFEADTRGEFGIGSAAQYGSADLSKTVHSNENFRRANFTSADMRESDFSGSTFNGAYLEKAVAYKANFSGADLSDTLMDRMVLNEANLTNAVLVRSVLTRSDLGGAKIEGADFSDAVIDLLQKQALCKYATGTNPLTGVDTRKSLGCGNSRRNAYGSPSSPLLSAPPQRLLGRDGFCDEKTGLCDVK</sequence>
<comment type="function">
    <text evidence="3">Pentapeptide repeat protein of unknown function. Subject to degradation when reduced.</text>
</comment>
<comment type="subunit">
    <text evidence="3 4">Interacts with thioredoxin (PubMed:20049866). Interacts in vitro with LTO1 (PubMed:25412899).</text>
</comment>
<comment type="subcellular location">
    <subcellularLocation>
        <location evidence="2 3">Plastid</location>
        <location evidence="2 3">Chloroplast thylakoid lumen</location>
    </subcellularLocation>
</comment>
<comment type="alternative products">
    <event type="alternative splicing"/>
    <isoform>
        <id>Q8H1Q1-1</id>
        <name>1</name>
        <sequence type="displayed"/>
    </isoform>
    <text>A number of isoforms are produced. According to EST sequences.</text>
</comment>
<comment type="sequence caution" evidence="6">
    <conflict type="erroneous gene model prediction">
        <sequence resource="EMBL-CDS" id="AAG12570"/>
    </conflict>
</comment>
<gene>
    <name evidence="5" type="primary">TL20.3</name>
    <name evidence="7" type="ordered locus">At1g12250</name>
    <name evidence="8" type="ORF">T28K15.2</name>
</gene>
<reference key="1">
    <citation type="journal article" date="2000" name="Nature">
        <title>Sequence and analysis of chromosome 1 of the plant Arabidopsis thaliana.</title>
        <authorList>
            <person name="Theologis A."/>
            <person name="Ecker J.R."/>
            <person name="Palm C.J."/>
            <person name="Federspiel N.A."/>
            <person name="Kaul S."/>
            <person name="White O."/>
            <person name="Alonso J."/>
            <person name="Altafi H."/>
            <person name="Araujo R."/>
            <person name="Bowman C.L."/>
            <person name="Brooks S.Y."/>
            <person name="Buehler E."/>
            <person name="Chan A."/>
            <person name="Chao Q."/>
            <person name="Chen H."/>
            <person name="Cheuk R.F."/>
            <person name="Chin C.W."/>
            <person name="Chung M.K."/>
            <person name="Conn L."/>
            <person name="Conway A.B."/>
            <person name="Conway A.R."/>
            <person name="Creasy T.H."/>
            <person name="Dewar K."/>
            <person name="Dunn P."/>
            <person name="Etgu P."/>
            <person name="Feldblyum T.V."/>
            <person name="Feng J.-D."/>
            <person name="Fong B."/>
            <person name="Fujii C.Y."/>
            <person name="Gill J.E."/>
            <person name="Goldsmith A.D."/>
            <person name="Haas B."/>
            <person name="Hansen N.F."/>
            <person name="Hughes B."/>
            <person name="Huizar L."/>
            <person name="Hunter J.L."/>
            <person name="Jenkins J."/>
            <person name="Johnson-Hopson C."/>
            <person name="Khan S."/>
            <person name="Khaykin E."/>
            <person name="Kim C.J."/>
            <person name="Koo H.L."/>
            <person name="Kremenetskaia I."/>
            <person name="Kurtz D.B."/>
            <person name="Kwan A."/>
            <person name="Lam B."/>
            <person name="Langin-Hooper S."/>
            <person name="Lee A."/>
            <person name="Lee J.M."/>
            <person name="Lenz C.A."/>
            <person name="Li J.H."/>
            <person name="Li Y.-P."/>
            <person name="Lin X."/>
            <person name="Liu S.X."/>
            <person name="Liu Z.A."/>
            <person name="Luros J.S."/>
            <person name="Maiti R."/>
            <person name="Marziali A."/>
            <person name="Militscher J."/>
            <person name="Miranda M."/>
            <person name="Nguyen M."/>
            <person name="Nierman W.C."/>
            <person name="Osborne B.I."/>
            <person name="Pai G."/>
            <person name="Peterson J."/>
            <person name="Pham P.K."/>
            <person name="Rizzo M."/>
            <person name="Rooney T."/>
            <person name="Rowley D."/>
            <person name="Sakano H."/>
            <person name="Salzberg S.L."/>
            <person name="Schwartz J.R."/>
            <person name="Shinn P."/>
            <person name="Southwick A.M."/>
            <person name="Sun H."/>
            <person name="Tallon L.J."/>
            <person name="Tambunga G."/>
            <person name="Toriumi M.J."/>
            <person name="Town C.D."/>
            <person name="Utterback T."/>
            <person name="Van Aken S."/>
            <person name="Vaysberg M."/>
            <person name="Vysotskaia V.S."/>
            <person name="Walker M."/>
            <person name="Wu D."/>
            <person name="Yu G."/>
            <person name="Fraser C.M."/>
            <person name="Venter J.C."/>
            <person name="Davis R.W."/>
        </authorList>
    </citation>
    <scope>NUCLEOTIDE SEQUENCE [LARGE SCALE GENOMIC DNA]</scope>
    <source>
        <strain>cv. Columbia</strain>
    </source>
</reference>
<reference key="2">
    <citation type="journal article" date="2017" name="Plant J.">
        <title>Araport11: a complete reannotation of the Arabidopsis thaliana reference genome.</title>
        <authorList>
            <person name="Cheng C.Y."/>
            <person name="Krishnakumar V."/>
            <person name="Chan A.P."/>
            <person name="Thibaud-Nissen F."/>
            <person name="Schobel S."/>
            <person name="Town C.D."/>
        </authorList>
    </citation>
    <scope>GENOME REANNOTATION</scope>
    <source>
        <strain>cv. Columbia</strain>
    </source>
</reference>
<reference key="3">
    <citation type="journal article" date="2003" name="Science">
        <title>Empirical analysis of transcriptional activity in the Arabidopsis genome.</title>
        <authorList>
            <person name="Yamada K."/>
            <person name="Lim J."/>
            <person name="Dale J.M."/>
            <person name="Chen H."/>
            <person name="Shinn P."/>
            <person name="Palm C.J."/>
            <person name="Southwick A.M."/>
            <person name="Wu H.C."/>
            <person name="Kim C.J."/>
            <person name="Nguyen M."/>
            <person name="Pham P.K."/>
            <person name="Cheuk R.F."/>
            <person name="Karlin-Newmann G."/>
            <person name="Liu S.X."/>
            <person name="Lam B."/>
            <person name="Sakano H."/>
            <person name="Wu T."/>
            <person name="Yu G."/>
            <person name="Miranda M."/>
            <person name="Quach H.L."/>
            <person name="Tripp M."/>
            <person name="Chang C.H."/>
            <person name="Lee J.M."/>
            <person name="Toriumi M.J."/>
            <person name="Chan M.M."/>
            <person name="Tang C.C."/>
            <person name="Onodera C.S."/>
            <person name="Deng J.M."/>
            <person name="Akiyama K."/>
            <person name="Ansari Y."/>
            <person name="Arakawa T."/>
            <person name="Banh J."/>
            <person name="Banno F."/>
            <person name="Bowser L."/>
            <person name="Brooks S.Y."/>
            <person name="Carninci P."/>
            <person name="Chao Q."/>
            <person name="Choy N."/>
            <person name="Enju A."/>
            <person name="Goldsmith A.D."/>
            <person name="Gurjal M."/>
            <person name="Hansen N.F."/>
            <person name="Hayashizaki Y."/>
            <person name="Johnson-Hopson C."/>
            <person name="Hsuan V.W."/>
            <person name="Iida K."/>
            <person name="Karnes M."/>
            <person name="Khan S."/>
            <person name="Koesema E."/>
            <person name="Ishida J."/>
            <person name="Jiang P.X."/>
            <person name="Jones T."/>
            <person name="Kawai J."/>
            <person name="Kamiya A."/>
            <person name="Meyers C."/>
            <person name="Nakajima M."/>
            <person name="Narusaka M."/>
            <person name="Seki M."/>
            <person name="Sakurai T."/>
            <person name="Satou M."/>
            <person name="Tamse R."/>
            <person name="Vaysberg M."/>
            <person name="Wallender E.K."/>
            <person name="Wong C."/>
            <person name="Yamamura Y."/>
            <person name="Yuan S."/>
            <person name="Shinozaki K."/>
            <person name="Davis R.W."/>
            <person name="Theologis A."/>
            <person name="Ecker J.R."/>
        </authorList>
    </citation>
    <scope>NUCLEOTIDE SEQUENCE [LARGE SCALE MRNA]</scope>
    <source>
        <strain>cv. Columbia</strain>
    </source>
</reference>
<reference key="4">
    <citation type="journal article" date="2008" name="PLoS ONE">
        <title>Sorting signals, N-terminal modifications and abundance of the chloroplast proteome.</title>
        <authorList>
            <person name="Zybailov B."/>
            <person name="Rutschow H."/>
            <person name="Friso G."/>
            <person name="Rudella A."/>
            <person name="Emanuelsson O."/>
            <person name="Sun Q."/>
            <person name="van Wijk K.J."/>
        </authorList>
    </citation>
    <scope>IDENTIFICATION BY MASS SPECTROMETRY</scope>
    <scope>SUBCELLULAR LOCATION [LARGE SCALE ANALYSIS]</scope>
</reference>
<reference key="5">
    <citation type="journal article" date="2010" name="Proteomics">
        <title>Thioredoxin targets of the plant chloroplast lumen and their implications for plastid function.</title>
        <authorList>
            <person name="Hall M."/>
            <person name="Mata-Cabana A."/>
            <person name="Akerlund H.E."/>
            <person name="Florencio F.J."/>
            <person name="Schroeder W.P."/>
            <person name="Lindahl M."/>
            <person name="Kieselbach T."/>
        </authorList>
    </citation>
    <scope>FUNCTION</scope>
    <scope>SUBCELLULAR LOCATION</scope>
    <scope>INTERACTION WITH THIOREDOXIN</scope>
</reference>
<reference key="6">
    <citation type="journal article" date="2014" name="Protein Pept. Lett.">
        <title>Identification of potential targets for thylakoid oxidoreductase AtVKOR/LTO1 in chloroplasts.</title>
        <authorList>
            <person name="Lu Y."/>
            <person name="Du J.J."/>
            <person name="Yu Z.B."/>
            <person name="Peng J.J."/>
            <person name="Xu J.N."/>
            <person name="Wang X.Y."/>
        </authorList>
    </citation>
    <scope>INTERACTION WITH LTO1</scope>
</reference>
<feature type="transit peptide" description="Chloroplast" evidence="1">
    <location>
        <begin position="1"/>
        <end position="59"/>
    </location>
</feature>
<feature type="transit peptide" description="Thylakoid" evidence="1">
    <location>
        <begin position="60"/>
        <end position="90"/>
    </location>
</feature>
<feature type="chain" id="PRO_0000342096" description="Thylakoid lumenal protein TL20.3, chloroplastic">
    <location>
        <begin position="91"/>
        <end position="280"/>
    </location>
</feature>
<feature type="domain" description="Pentapeptide repeat 1" evidence="6">
    <location>
        <begin position="124"/>
        <end position="163"/>
    </location>
</feature>
<feature type="domain" description="Pentapeptide repeat 2" evidence="6">
    <location>
        <begin position="169"/>
        <end position="208"/>
    </location>
</feature>
<feature type="sequence conflict" description="In Ref. 3; AAK59627." evidence="6" ref="3">
    <original>T</original>
    <variation>K</variation>
    <location>
        <position position="66"/>
    </location>
</feature>
<name>TL203_ARATH</name>
<organism>
    <name type="scientific">Arabidopsis thaliana</name>
    <name type="common">Mouse-ear cress</name>
    <dbReference type="NCBI Taxonomy" id="3702"/>
    <lineage>
        <taxon>Eukaryota</taxon>
        <taxon>Viridiplantae</taxon>
        <taxon>Streptophyta</taxon>
        <taxon>Embryophyta</taxon>
        <taxon>Tracheophyta</taxon>
        <taxon>Spermatophyta</taxon>
        <taxon>Magnoliopsida</taxon>
        <taxon>eudicotyledons</taxon>
        <taxon>Gunneridae</taxon>
        <taxon>Pentapetalae</taxon>
        <taxon>rosids</taxon>
        <taxon>malvids</taxon>
        <taxon>Brassicales</taxon>
        <taxon>Brassicaceae</taxon>
        <taxon>Camelineae</taxon>
        <taxon>Arabidopsis</taxon>
    </lineage>
</organism>
<accession>Q8H1Q1</accession>
<accession>Q94C72</accession>
<accession>Q9FWX1</accession>
<protein>
    <recommendedName>
        <fullName evidence="5">Thylakoid lumenal protein TL20.3, chloroplastic</fullName>
    </recommendedName>
</protein>
<keyword id="KW-0025">Alternative splicing</keyword>
<keyword id="KW-0150">Chloroplast</keyword>
<keyword id="KW-0934">Plastid</keyword>
<keyword id="KW-1185">Reference proteome</keyword>
<keyword id="KW-0677">Repeat</keyword>
<keyword id="KW-0793">Thylakoid</keyword>
<keyword id="KW-0809">Transit peptide</keyword>
<evidence type="ECO:0000255" key="1"/>
<evidence type="ECO:0000269" key="2">
    <source>
    </source>
</evidence>
<evidence type="ECO:0000269" key="3">
    <source>
    </source>
</evidence>
<evidence type="ECO:0000269" key="4">
    <source>
    </source>
</evidence>
<evidence type="ECO:0000303" key="5">
    <source>
    </source>
</evidence>
<evidence type="ECO:0000305" key="6"/>
<evidence type="ECO:0000312" key="7">
    <source>
        <dbReference type="Araport" id="AT1G12250"/>
    </source>
</evidence>
<evidence type="ECO:0000312" key="8">
    <source>
        <dbReference type="EMBL" id="AAG12570.1"/>
    </source>
</evidence>